<comment type="function">
    <text evidence="5 9">Minor mitochondrial aldehyde dehydrogenase isoform. Plays a role in regulation or biosynthesis of electron transport chain components. Involved in the biosynthesis of acetate during anaerobic growth on glucose.</text>
</comment>
<comment type="catalytic activity">
    <reaction evidence="10">
        <text>acetaldehyde + NADP(+) + H2O = acetate + NADPH + 2 H(+)</text>
        <dbReference type="Rhea" id="RHEA:25298"/>
        <dbReference type="ChEBI" id="CHEBI:15343"/>
        <dbReference type="ChEBI" id="CHEBI:15377"/>
        <dbReference type="ChEBI" id="CHEBI:15378"/>
        <dbReference type="ChEBI" id="CHEBI:30089"/>
        <dbReference type="ChEBI" id="CHEBI:57783"/>
        <dbReference type="ChEBI" id="CHEBI:58349"/>
        <dbReference type="EC" id="1.2.1.4"/>
    </reaction>
    <physiologicalReaction direction="left-to-right" evidence="10">
        <dbReference type="Rhea" id="RHEA:25299"/>
    </physiologicalReaction>
</comment>
<comment type="catalytic activity">
    <reaction evidence="10">
        <text>propanal + NADP(+) + H2O = propanoate + NADPH + 2 H(+)</text>
        <dbReference type="Rhea" id="RHEA:27918"/>
        <dbReference type="ChEBI" id="CHEBI:15377"/>
        <dbReference type="ChEBI" id="CHEBI:15378"/>
        <dbReference type="ChEBI" id="CHEBI:17153"/>
        <dbReference type="ChEBI" id="CHEBI:17272"/>
        <dbReference type="ChEBI" id="CHEBI:57783"/>
        <dbReference type="ChEBI" id="CHEBI:58349"/>
    </reaction>
    <physiologicalReaction direction="left-to-right" evidence="10">
        <dbReference type="Rhea" id="RHEA:27919"/>
    </physiologicalReaction>
</comment>
<comment type="catalytic activity">
    <reaction evidence="10">
        <text>propanal + NAD(+) + H2O = propanoate + NADH + 2 H(+)</text>
        <dbReference type="Rhea" id="RHEA:67256"/>
        <dbReference type="ChEBI" id="CHEBI:15377"/>
        <dbReference type="ChEBI" id="CHEBI:15378"/>
        <dbReference type="ChEBI" id="CHEBI:17153"/>
        <dbReference type="ChEBI" id="CHEBI:17272"/>
        <dbReference type="ChEBI" id="CHEBI:57540"/>
        <dbReference type="ChEBI" id="CHEBI:57945"/>
    </reaction>
    <physiologicalReaction direction="left-to-right" evidence="10">
        <dbReference type="Rhea" id="RHEA:67257"/>
    </physiologicalReaction>
</comment>
<comment type="activity regulation">
    <text evidence="10">The activity increases in the presence of K(+) ions: 15-fold with NADP and 40-fold with NAD, respectively.</text>
</comment>
<comment type="biophysicochemical properties">
    <kinetics>
        <KM evidence="10">0.64 mM for NADP (with acetaldehyde as cosubstrate)</KM>
        <KM evidence="10">3.47 mM for NADP (with propionaldehyde as cosubstrate)</KM>
        <KM evidence="10">6.43 mM for NAD (with propionaldehyde as cosubstrate)</KM>
        <KM evidence="10">0.058 mM for acetaldehyde (with NADP as cosubstrate)</KM>
        <KM evidence="10">0.39 mM for propionaldehyde (with NADP as cosubstrate)</KM>
        <KM evidence="10">0.83 mM for propionaldehyde (with NAD as cosubstrate)</KM>
        <Vmax evidence="10">1.1 umol/min/mg enzyme with acetaldehyde and NADP as substrates</Vmax>
        <Vmax evidence="10">0.45 umol/min/mg enzyme with propionaldehyde and NADP as substrates</Vmax>
        <Vmax evidence="10">0.011 umol/min/mg enzyme with propionaldehyde and NAD as substrates</Vmax>
    </kinetics>
</comment>
<comment type="pathway">
    <text evidence="12">Alcohol metabolism; ethanol degradation; acetate from ethanol: step 2/2.</text>
</comment>
<comment type="subcellular location">
    <subcellularLocation>
        <location evidence="6 8 10">Mitochondrion matrix</location>
    </subcellularLocation>
</comment>
<comment type="miscellaneous">
    <text evidence="7">Present with 23300 molecules/cell in log phase SD medium.</text>
</comment>
<comment type="similarity">
    <text evidence="12">Belongs to the aldehyde dehydrogenase family.</text>
</comment>
<keyword id="KW-0496">Mitochondrion</keyword>
<keyword id="KW-0520">NAD</keyword>
<keyword id="KW-0521">NADP</keyword>
<keyword id="KW-0560">Oxidoreductase</keyword>
<keyword id="KW-1185">Reference proteome</keyword>
<keyword id="KW-0809">Transit peptide</keyword>
<proteinExistence type="evidence at protein level"/>
<evidence type="ECO:0000250" key="1"/>
<evidence type="ECO:0000255" key="2"/>
<evidence type="ECO:0000255" key="3">
    <source>
        <dbReference type="PROSITE-ProRule" id="PRU10007"/>
    </source>
</evidence>
<evidence type="ECO:0000255" key="4">
    <source>
        <dbReference type="PROSITE-ProRule" id="PRU10008"/>
    </source>
</evidence>
<evidence type="ECO:0000269" key="5">
    <source>
    </source>
</evidence>
<evidence type="ECO:0000269" key="6">
    <source>
    </source>
</evidence>
<evidence type="ECO:0000269" key="7">
    <source>
    </source>
</evidence>
<evidence type="ECO:0000269" key="8">
    <source>
    </source>
</evidence>
<evidence type="ECO:0000269" key="9">
    <source>
    </source>
</evidence>
<evidence type="ECO:0000269" key="10">
    <source>
    </source>
</evidence>
<evidence type="ECO:0000303" key="11">
    <source>
    </source>
</evidence>
<evidence type="ECO:0000305" key="12"/>
<gene>
    <name type="primary">ALD5</name>
    <name type="synonym">ALD3</name>
    <name type="synonym">ALDH5</name>
    <name type="ordered locus">YER073W</name>
</gene>
<reference key="1">
    <citation type="journal article" date="1997" name="Adv. Exp. Med. Biol.">
        <title>Saccharomyces cerevisiae aldehyde dehydrogenases. Identification and expression.</title>
        <authorList>
            <person name="Wang X."/>
            <person name="Bai Y."/>
            <person name="Ni L."/>
            <person name="Weiner H."/>
        </authorList>
    </citation>
    <scope>NUCLEOTIDE SEQUENCE [GENOMIC DNA]</scope>
</reference>
<reference key="2">
    <citation type="journal article" date="1997" name="Nature">
        <title>The nucleotide sequence of Saccharomyces cerevisiae chromosome V.</title>
        <authorList>
            <person name="Dietrich F.S."/>
            <person name="Mulligan J.T."/>
            <person name="Hennessy K.M."/>
            <person name="Yelton M.A."/>
            <person name="Allen E."/>
            <person name="Araujo R."/>
            <person name="Aviles E."/>
            <person name="Berno A."/>
            <person name="Brennan T."/>
            <person name="Carpenter J."/>
            <person name="Chen E."/>
            <person name="Cherry J.M."/>
            <person name="Chung E."/>
            <person name="Duncan M."/>
            <person name="Guzman E."/>
            <person name="Hartzell G."/>
            <person name="Hunicke-Smith S."/>
            <person name="Hyman R.W."/>
            <person name="Kayser A."/>
            <person name="Komp C."/>
            <person name="Lashkari D."/>
            <person name="Lew H."/>
            <person name="Lin D."/>
            <person name="Mosedale D."/>
            <person name="Nakahara K."/>
            <person name="Namath A."/>
            <person name="Norgren R."/>
            <person name="Oefner P."/>
            <person name="Oh C."/>
            <person name="Petel F.X."/>
            <person name="Roberts D."/>
            <person name="Sehl P."/>
            <person name="Schramm S."/>
            <person name="Shogren T."/>
            <person name="Smith V."/>
            <person name="Taylor P."/>
            <person name="Wei Y."/>
            <person name="Botstein D."/>
            <person name="Davis R.W."/>
        </authorList>
    </citation>
    <scope>NUCLEOTIDE SEQUENCE [LARGE SCALE GENOMIC DNA]</scope>
    <source>
        <strain>ATCC 204508 / S288c</strain>
    </source>
</reference>
<reference key="3">
    <citation type="journal article" date="2014" name="G3 (Bethesda)">
        <title>The reference genome sequence of Saccharomyces cerevisiae: Then and now.</title>
        <authorList>
            <person name="Engel S.R."/>
            <person name="Dietrich F.S."/>
            <person name="Fisk D.G."/>
            <person name="Binkley G."/>
            <person name="Balakrishnan R."/>
            <person name="Costanzo M.C."/>
            <person name="Dwight S.S."/>
            <person name="Hitz B.C."/>
            <person name="Karra K."/>
            <person name="Nash R.S."/>
            <person name="Weng S."/>
            <person name="Wong E.D."/>
            <person name="Lloyd P."/>
            <person name="Skrzypek M.S."/>
            <person name="Miyasato S.R."/>
            <person name="Simison M."/>
            <person name="Cherry J.M."/>
        </authorList>
    </citation>
    <scope>GENOME REANNOTATION</scope>
    <scope>SEQUENCE REVISION TO 411</scope>
    <source>
        <strain>ATCC 204508 / S288c</strain>
    </source>
</reference>
<reference key="4">
    <citation type="journal article" date="1998" name="J. Bacteriol.">
        <title>Molecular cloning, characterization, and potential roles of cytosolic and mitochondrial aldehyde dehydrogenases in ethanol metabolism in Saccharomyces cerevisiae.</title>
        <authorList>
            <person name="Wang X."/>
            <person name="Mann C.J."/>
            <person name="Bai Y."/>
            <person name="Ni L."/>
            <person name="Weiner H."/>
        </authorList>
    </citation>
    <scope>CATALYTIC ACTIVITY</scope>
    <scope>BIOPHYSICOCHEMICAL PROPERTIES</scope>
    <scope>ACTIVITY REGULATION</scope>
    <scope>SUBCELLULAR LOCATION</scope>
</reference>
<reference key="5">
    <citation type="journal article" date="1999" name="FEMS Microbiol. Lett.">
        <title>Involvement of mitochondrial aldehyde dehydrogenase ALD5 in maintenance of the mitochondrial electron transport chain in Saccharomyces cerevisiae.</title>
        <authorList>
            <person name="Kurita O."/>
            <person name="Nishida Y."/>
        </authorList>
    </citation>
    <scope>FUNCTION</scope>
</reference>
<reference key="6">
    <citation type="journal article" date="2003" name="Nature">
        <title>Global analysis of protein localization in budding yeast.</title>
        <authorList>
            <person name="Huh W.-K."/>
            <person name="Falvo J.V."/>
            <person name="Gerke L.C."/>
            <person name="Carroll A.S."/>
            <person name="Howson R.W."/>
            <person name="Weissman J.S."/>
            <person name="O'Shea E.K."/>
        </authorList>
    </citation>
    <scope>SUBCELLULAR LOCATION [LARGE SCALE ANALYSIS]</scope>
</reference>
<reference key="7">
    <citation type="journal article" date="2003" name="Nature">
        <title>Global analysis of protein expression in yeast.</title>
        <authorList>
            <person name="Ghaemmaghami S."/>
            <person name="Huh W.-K."/>
            <person name="Bower K."/>
            <person name="Howson R.W."/>
            <person name="Belle A."/>
            <person name="Dephoure N."/>
            <person name="O'Shea E.K."/>
            <person name="Weissman J.S."/>
        </authorList>
    </citation>
    <scope>LEVEL OF PROTEIN EXPRESSION [LARGE SCALE ANALYSIS]</scope>
</reference>
<reference key="8">
    <citation type="journal article" date="2003" name="Proc. Natl. Acad. Sci. U.S.A.">
        <title>The proteome of Saccharomyces cerevisiae mitochondria.</title>
        <authorList>
            <person name="Sickmann A."/>
            <person name="Reinders J."/>
            <person name="Wagner Y."/>
            <person name="Joppich C."/>
            <person name="Zahedi R.P."/>
            <person name="Meyer H.E."/>
            <person name="Schoenfisch B."/>
            <person name="Perschil I."/>
            <person name="Chacinska A."/>
            <person name="Guiard B."/>
            <person name="Rehling P."/>
            <person name="Pfanner N."/>
            <person name="Meisinger C."/>
        </authorList>
    </citation>
    <scope>SUBCELLULAR LOCATION [LARGE SCALE ANALYSIS]</scope>
    <source>
        <strain>ATCC 76625 / YPH499</strain>
    </source>
</reference>
<reference key="9">
    <citation type="journal article" date="2004" name="Microbiology">
        <title>Functional analysis of the ALD gene family of Saccharomyces cerevisiae during anaerobic growth on glucose: the NADP+-dependent Ald6p and Ald5p isoforms play a major role in acetate formation.</title>
        <authorList>
            <person name="Saint-Prix F."/>
            <person name="Boenquist L."/>
            <person name="Dequin S."/>
        </authorList>
    </citation>
    <scope>FUNCTION</scope>
</reference>
<protein>
    <recommendedName>
        <fullName evidence="11">Aldehyde dehydrogenase 5, mitochondrial</fullName>
        <ecNumber evidence="10">1.2.1.-</ecNumber>
        <ecNumber evidence="10">1.2.1.4</ecNumber>
    </recommendedName>
</protein>
<name>ALDH5_YEAST</name>
<accession>P40047</accession>
<accession>D3DLX8</accession>
<sequence>MLSRTRAAAPNSRIFTRSLLRLYSQAPLRVPITLPNGFTYEQPTGLFINGEFVASKQKKTFDVINPSNEEKITTVYKAMEDDVDEAVAAAKKAFETKWSIVEPEVRAKALFNLADLVEKHQETLAAIESMDNGKSLFCARGDVALVSKYLRSCGGWADKIYGNVIDTGKNHFTYSIKEPLGVCGQIIPWNFPLLMWSWKIGPALATGNTVVLKPAETTPLSALFASQLCQEAGIPAGVVNILPGSGRVVGERLSAHPDVKKIAFTGSTATGRHIMKVAADTVKKVTLELGGKSPNIVFADADLDKAVKNIAFGIFYNSGEVCCAGSRIYIQDTVYEEVLQKLKDYTESLKVGDPFDEEVFQGAQTSDKQLHKILDYVDVAKSEGARLVTGGARHGSKGYFVKPTVFADVKEDMRIVKEEVFGPIVTVSKFSTVDEVIAMANDSQYGLAAGIHTNDINKAVDVSKRVKAGTVWINTYNNFHQNVPFGGFGQSGIGREMGEAALSNYTQTKSVRIAIDKPIR</sequence>
<feature type="transit peptide" description="Mitochondrion" evidence="2">
    <location>
        <begin position="1"/>
        <end position="23"/>
    </location>
</feature>
<feature type="chain" id="PRO_0000007166" description="Aldehyde dehydrogenase 5, mitochondrial">
    <location>
        <begin position="24"/>
        <end position="520"/>
    </location>
</feature>
<feature type="active site" description="Proton acceptor" evidence="3 4">
    <location>
        <position position="288"/>
    </location>
</feature>
<feature type="active site" description="Nucleophile" evidence="3 4">
    <location>
        <position position="322"/>
    </location>
</feature>
<feature type="binding site" evidence="1">
    <location>
        <begin position="266"/>
        <end position="271"/>
    </location>
    <ligand>
        <name>NAD(+)</name>
        <dbReference type="ChEBI" id="CHEBI:57540"/>
    </ligand>
</feature>
<feature type="site" description="Transition state stabilizer" evidence="1">
    <location>
        <position position="190"/>
    </location>
</feature>
<feature type="sequence conflict" description="In Ref. 1; AAB01220." evidence="12" ref="1">
    <original>I</original>
    <variation>T</variation>
    <location>
        <position position="48"/>
    </location>
</feature>
<feature type="sequence conflict" description="In Ref. 1; AAB01220." evidence="12" ref="1">
    <original>A</original>
    <variation>L</variation>
    <location>
        <position position="90"/>
    </location>
</feature>
<feature type="sequence conflict" description="In Ref. 1; AAB01220." evidence="12" ref="1">
    <original>AFETKWSIVEPE</original>
    <variation>LLKRSVYCRAG</variation>
    <location>
        <begin position="93"/>
        <end position="104"/>
    </location>
</feature>
<feature type="sequence conflict" description="In Ref. 2; AAB64612." evidence="12" ref="2">
    <original>E</original>
    <variation>G</variation>
    <location>
        <position position="411"/>
    </location>
</feature>
<dbReference type="EC" id="1.2.1.-" evidence="10"/>
<dbReference type="EC" id="1.2.1.4" evidence="10"/>
<dbReference type="EMBL" id="U56605">
    <property type="protein sequence ID" value="AAB01220.1"/>
    <property type="molecule type" value="Genomic_DNA"/>
</dbReference>
<dbReference type="EMBL" id="U18814">
    <property type="protein sequence ID" value="AAB64612.1"/>
    <property type="molecule type" value="Genomic_DNA"/>
</dbReference>
<dbReference type="EMBL" id="BK006939">
    <property type="protein sequence ID" value="DAA07732.2"/>
    <property type="molecule type" value="Genomic_DNA"/>
</dbReference>
<dbReference type="PIR" id="S50576">
    <property type="entry name" value="S50576"/>
</dbReference>
<dbReference type="RefSeq" id="NP_010996.2">
    <property type="nucleotide sequence ID" value="NM_001178964.2"/>
</dbReference>
<dbReference type="SMR" id="P40047"/>
<dbReference type="BioGRID" id="36816">
    <property type="interactions" value="141"/>
</dbReference>
<dbReference type="DIP" id="DIP-3872N"/>
<dbReference type="FunCoup" id="P40047">
    <property type="interactions" value="826"/>
</dbReference>
<dbReference type="IntAct" id="P40047">
    <property type="interactions" value="39"/>
</dbReference>
<dbReference type="STRING" id="4932.YER073W"/>
<dbReference type="iPTMnet" id="P40047"/>
<dbReference type="PaxDb" id="4932-YER073W"/>
<dbReference type="PeptideAtlas" id="P40047"/>
<dbReference type="EnsemblFungi" id="YER073W_mRNA">
    <property type="protein sequence ID" value="YER073W"/>
    <property type="gene ID" value="YER073W"/>
</dbReference>
<dbReference type="GeneID" id="856804"/>
<dbReference type="KEGG" id="sce:YER073W"/>
<dbReference type="AGR" id="SGD:S000000875"/>
<dbReference type="SGD" id="S000000875">
    <property type="gene designation" value="ALD5"/>
</dbReference>
<dbReference type="VEuPathDB" id="FungiDB:YER073W"/>
<dbReference type="eggNOG" id="KOG2450">
    <property type="taxonomic scope" value="Eukaryota"/>
</dbReference>
<dbReference type="GeneTree" id="ENSGT00940000168475"/>
<dbReference type="HOGENOM" id="CLU_005391_0_1_1"/>
<dbReference type="InParanoid" id="P40047"/>
<dbReference type="OMA" id="WSNTFNK"/>
<dbReference type="OrthoDB" id="310895at2759"/>
<dbReference type="BioCyc" id="MetaCyc:MONOMER-13665"/>
<dbReference type="BioCyc" id="YEAST:MONOMER-13665"/>
<dbReference type="Reactome" id="R-SCE-380612">
    <property type="pathway name" value="Metabolism of serotonin"/>
</dbReference>
<dbReference type="Reactome" id="R-SCE-445355">
    <property type="pathway name" value="Smooth Muscle Contraction"/>
</dbReference>
<dbReference type="Reactome" id="R-SCE-5365859">
    <property type="pathway name" value="RA biosynthesis pathway"/>
</dbReference>
<dbReference type="Reactome" id="R-SCE-70350">
    <property type="pathway name" value="Fructose catabolism"/>
</dbReference>
<dbReference type="Reactome" id="R-SCE-71384">
    <property type="pathway name" value="Ethanol oxidation"/>
</dbReference>
<dbReference type="Reactome" id="R-SCE-9837999">
    <property type="pathway name" value="Mitochondrial protein degradation"/>
</dbReference>
<dbReference type="SABIO-RK" id="P40047"/>
<dbReference type="UniPathway" id="UPA00780">
    <property type="reaction ID" value="UER00768"/>
</dbReference>
<dbReference type="BioGRID-ORCS" id="856804">
    <property type="hits" value="2 hits in 10 CRISPR screens"/>
</dbReference>
<dbReference type="PRO" id="PR:P40047"/>
<dbReference type="Proteomes" id="UP000002311">
    <property type="component" value="Chromosome V"/>
</dbReference>
<dbReference type="RNAct" id="P40047">
    <property type="molecule type" value="protein"/>
</dbReference>
<dbReference type="GO" id="GO:0005759">
    <property type="term" value="C:mitochondrial matrix"/>
    <property type="evidence" value="ECO:0007669"/>
    <property type="project" value="UniProtKB-SubCell"/>
</dbReference>
<dbReference type="GO" id="GO:0005739">
    <property type="term" value="C:mitochondrion"/>
    <property type="evidence" value="ECO:0000314"/>
    <property type="project" value="SGD"/>
</dbReference>
<dbReference type="GO" id="GO:0140088">
    <property type="term" value="F:acetaldehyde dehydrogenase (NADP+) activity"/>
    <property type="evidence" value="ECO:0007669"/>
    <property type="project" value="RHEA"/>
</dbReference>
<dbReference type="GO" id="GO:0004029">
    <property type="term" value="F:aldehyde dehydrogenase (NAD+) activity"/>
    <property type="evidence" value="ECO:0000314"/>
    <property type="project" value="SGD"/>
</dbReference>
<dbReference type="GO" id="GO:0004030">
    <property type="term" value="F:aldehyde dehydrogenase [NAD(P)+] activity"/>
    <property type="evidence" value="ECO:0000314"/>
    <property type="project" value="SGD"/>
</dbReference>
<dbReference type="GO" id="GO:0019413">
    <property type="term" value="P:acetate biosynthetic process"/>
    <property type="evidence" value="ECO:0000315"/>
    <property type="project" value="SGD"/>
</dbReference>
<dbReference type="GO" id="GO:0006068">
    <property type="term" value="P:ethanol catabolic process"/>
    <property type="evidence" value="ECO:0007669"/>
    <property type="project" value="UniProtKB-UniPathway"/>
</dbReference>
<dbReference type="CDD" id="cd07091">
    <property type="entry name" value="ALDH_F1-2_Ald2-like"/>
    <property type="match status" value="1"/>
</dbReference>
<dbReference type="FunFam" id="3.40.605.10:FF:000011">
    <property type="entry name" value="ALD5p Mitochondrial aldehyde dehydrogenase"/>
    <property type="match status" value="1"/>
</dbReference>
<dbReference type="FunFam" id="3.40.605.10:FF:000026">
    <property type="entry name" value="Aldehyde dehydrogenase, putative"/>
    <property type="match status" value="1"/>
</dbReference>
<dbReference type="FunFam" id="3.40.309.10:FF:000001">
    <property type="entry name" value="Mitochondrial aldehyde dehydrogenase 2"/>
    <property type="match status" value="1"/>
</dbReference>
<dbReference type="Gene3D" id="3.40.605.10">
    <property type="entry name" value="Aldehyde Dehydrogenase, Chain A, domain 1"/>
    <property type="match status" value="1"/>
</dbReference>
<dbReference type="Gene3D" id="3.40.309.10">
    <property type="entry name" value="Aldehyde Dehydrogenase, Chain A, domain 2"/>
    <property type="match status" value="1"/>
</dbReference>
<dbReference type="InterPro" id="IPR016161">
    <property type="entry name" value="Ald_DH/histidinol_DH"/>
</dbReference>
<dbReference type="InterPro" id="IPR016163">
    <property type="entry name" value="Ald_DH_C"/>
</dbReference>
<dbReference type="InterPro" id="IPR016160">
    <property type="entry name" value="Ald_DH_CS_CYS"/>
</dbReference>
<dbReference type="InterPro" id="IPR029510">
    <property type="entry name" value="Ald_DH_CS_GLU"/>
</dbReference>
<dbReference type="InterPro" id="IPR016162">
    <property type="entry name" value="Ald_DH_N"/>
</dbReference>
<dbReference type="InterPro" id="IPR015590">
    <property type="entry name" value="Aldehyde_DH_dom"/>
</dbReference>
<dbReference type="PANTHER" id="PTHR11699">
    <property type="entry name" value="ALDEHYDE DEHYDROGENASE-RELATED"/>
    <property type="match status" value="1"/>
</dbReference>
<dbReference type="Pfam" id="PF00171">
    <property type="entry name" value="Aldedh"/>
    <property type="match status" value="1"/>
</dbReference>
<dbReference type="SUPFAM" id="SSF53720">
    <property type="entry name" value="ALDH-like"/>
    <property type="match status" value="1"/>
</dbReference>
<dbReference type="PROSITE" id="PS00070">
    <property type="entry name" value="ALDEHYDE_DEHYDR_CYS"/>
    <property type="match status" value="1"/>
</dbReference>
<dbReference type="PROSITE" id="PS00687">
    <property type="entry name" value="ALDEHYDE_DEHYDR_GLU"/>
    <property type="match status" value="1"/>
</dbReference>
<organism>
    <name type="scientific">Saccharomyces cerevisiae (strain ATCC 204508 / S288c)</name>
    <name type="common">Baker's yeast</name>
    <dbReference type="NCBI Taxonomy" id="559292"/>
    <lineage>
        <taxon>Eukaryota</taxon>
        <taxon>Fungi</taxon>
        <taxon>Dikarya</taxon>
        <taxon>Ascomycota</taxon>
        <taxon>Saccharomycotina</taxon>
        <taxon>Saccharomycetes</taxon>
        <taxon>Saccharomycetales</taxon>
        <taxon>Saccharomycetaceae</taxon>
        <taxon>Saccharomyces</taxon>
    </lineage>
</organism>